<feature type="chain" id="PRO_0000306796" description="Dicer-like protein 2">
    <location>
        <begin position="1"/>
        <end position="1534"/>
    </location>
</feature>
<feature type="domain" description="Helicase ATP-binding" evidence="4">
    <location>
        <begin position="65"/>
        <end position="249"/>
    </location>
</feature>
<feature type="domain" description="Helicase C-terminal" evidence="5">
    <location>
        <begin position="404"/>
        <end position="575"/>
    </location>
</feature>
<feature type="domain" description="Dicer dsRNA-binding fold" evidence="6">
    <location>
        <begin position="597"/>
        <end position="700"/>
    </location>
</feature>
<feature type="domain" description="RNase III 1" evidence="2">
    <location>
        <begin position="959"/>
        <end position="1107"/>
    </location>
</feature>
<feature type="domain" description="RNase III 2" evidence="2">
    <location>
        <begin position="1153"/>
        <end position="1353"/>
    </location>
</feature>
<feature type="domain" description="DRBM" evidence="3">
    <location>
        <begin position="1383"/>
        <end position="1483"/>
    </location>
</feature>
<feature type="region of interest" description="Disordered" evidence="7">
    <location>
        <begin position="1"/>
        <end position="36"/>
    </location>
</feature>
<feature type="region of interest" description="Disordered" evidence="7">
    <location>
        <begin position="1492"/>
        <end position="1534"/>
    </location>
</feature>
<feature type="short sequence motif" description="DEAH box">
    <location>
        <begin position="192"/>
        <end position="195"/>
    </location>
</feature>
<feature type="compositionally biased region" description="Basic and acidic residues" evidence="7">
    <location>
        <begin position="1"/>
        <end position="10"/>
    </location>
</feature>
<feature type="compositionally biased region" description="Acidic residues" evidence="7">
    <location>
        <begin position="11"/>
        <end position="27"/>
    </location>
</feature>
<feature type="compositionally biased region" description="Basic and acidic residues" evidence="7">
    <location>
        <begin position="1492"/>
        <end position="1504"/>
    </location>
</feature>
<feature type="compositionally biased region" description="Polar residues" evidence="7">
    <location>
        <begin position="1505"/>
        <end position="1515"/>
    </location>
</feature>
<feature type="compositionally biased region" description="Basic and acidic residues" evidence="7">
    <location>
        <begin position="1516"/>
        <end position="1528"/>
    </location>
</feature>
<feature type="binding site" evidence="4">
    <location>
        <begin position="78"/>
        <end position="85"/>
    </location>
    <ligand>
        <name>ATP</name>
        <dbReference type="ChEBI" id="CHEBI:30616"/>
    </ligand>
</feature>
<feature type="binding site" evidence="1">
    <location>
        <position position="1193"/>
    </location>
    <ligand>
        <name>Mg(2+)</name>
        <dbReference type="ChEBI" id="CHEBI:18420"/>
    </ligand>
</feature>
<feature type="binding site" evidence="1">
    <location>
        <position position="1339"/>
    </location>
    <ligand>
        <name>Mg(2+)</name>
        <dbReference type="ChEBI" id="CHEBI:18420"/>
    </ligand>
</feature>
<feature type="binding site" evidence="1">
    <location>
        <position position="1342"/>
    </location>
    <ligand>
        <name>Mg(2+)</name>
        <dbReference type="ChEBI" id="CHEBI:18420"/>
    </ligand>
</feature>
<feature type="site" description="Important for activity" evidence="1">
    <location>
        <position position="1335"/>
    </location>
</feature>
<proteinExistence type="evidence at transcript level"/>
<evidence type="ECO:0000250" key="1"/>
<evidence type="ECO:0000255" key="2">
    <source>
        <dbReference type="PROSITE-ProRule" id="PRU00177"/>
    </source>
</evidence>
<evidence type="ECO:0000255" key="3">
    <source>
        <dbReference type="PROSITE-ProRule" id="PRU00266"/>
    </source>
</evidence>
<evidence type="ECO:0000255" key="4">
    <source>
        <dbReference type="PROSITE-ProRule" id="PRU00541"/>
    </source>
</evidence>
<evidence type="ECO:0000255" key="5">
    <source>
        <dbReference type="PROSITE-ProRule" id="PRU00542"/>
    </source>
</evidence>
<evidence type="ECO:0000255" key="6">
    <source>
        <dbReference type="PROSITE-ProRule" id="PRU00657"/>
    </source>
</evidence>
<evidence type="ECO:0000256" key="7">
    <source>
        <dbReference type="SAM" id="MobiDB-lite"/>
    </source>
</evidence>
<evidence type="ECO:0000269" key="8">
    <source>
    </source>
</evidence>
<evidence type="ECO:0000269" key="9">
    <source>
    </source>
</evidence>
<evidence type="ECO:0000269" key="10">
    <source>
    </source>
</evidence>
<evidence type="ECO:0000305" key="11"/>
<organism>
    <name type="scientific">Neurospora crassa (strain ATCC 24698 / 74-OR23-1A / CBS 708.71 / DSM 1257 / FGSC 987)</name>
    <dbReference type="NCBI Taxonomy" id="367110"/>
    <lineage>
        <taxon>Eukaryota</taxon>
        <taxon>Fungi</taxon>
        <taxon>Dikarya</taxon>
        <taxon>Ascomycota</taxon>
        <taxon>Pezizomycotina</taxon>
        <taxon>Sordariomycetes</taxon>
        <taxon>Sordariomycetidae</taxon>
        <taxon>Sordariales</taxon>
        <taxon>Sordariaceae</taxon>
        <taxon>Neurospora</taxon>
    </lineage>
</organism>
<reference key="1">
    <citation type="journal article" date="2003" name="Nucleic Acids Res.">
        <title>What's in the genome of a filamentous fungus? Analysis of the Neurospora genome sequence.</title>
        <authorList>
            <person name="Mannhaupt G."/>
            <person name="Montrone C."/>
            <person name="Haase D."/>
            <person name="Mewes H.-W."/>
            <person name="Aign V."/>
            <person name="Hoheisel J.D."/>
            <person name="Fartmann B."/>
            <person name="Nyakatura G."/>
            <person name="Kempken F."/>
            <person name="Maier J."/>
            <person name="Schulte U."/>
        </authorList>
    </citation>
    <scope>NUCLEOTIDE SEQUENCE [LARGE SCALE GENOMIC DNA]</scope>
    <source>
        <strain>ATCC 24698 / 74-OR23-1A / CBS 708.71 / DSM 1257 / FGSC 987</strain>
    </source>
</reference>
<reference key="2">
    <citation type="journal article" date="2003" name="Nature">
        <title>The genome sequence of the filamentous fungus Neurospora crassa.</title>
        <authorList>
            <person name="Galagan J.E."/>
            <person name="Calvo S.E."/>
            <person name="Borkovich K.A."/>
            <person name="Selker E.U."/>
            <person name="Read N.D."/>
            <person name="Jaffe D.B."/>
            <person name="FitzHugh W."/>
            <person name="Ma L.-J."/>
            <person name="Smirnov S."/>
            <person name="Purcell S."/>
            <person name="Rehman B."/>
            <person name="Elkins T."/>
            <person name="Engels R."/>
            <person name="Wang S."/>
            <person name="Nielsen C.B."/>
            <person name="Butler J."/>
            <person name="Endrizzi M."/>
            <person name="Qui D."/>
            <person name="Ianakiev P."/>
            <person name="Bell-Pedersen D."/>
            <person name="Nelson M.A."/>
            <person name="Werner-Washburne M."/>
            <person name="Selitrennikoff C.P."/>
            <person name="Kinsey J.A."/>
            <person name="Braun E.L."/>
            <person name="Zelter A."/>
            <person name="Schulte U."/>
            <person name="Kothe G.O."/>
            <person name="Jedd G."/>
            <person name="Mewes H.-W."/>
            <person name="Staben C."/>
            <person name="Marcotte E."/>
            <person name="Greenberg D."/>
            <person name="Roy A."/>
            <person name="Foley K."/>
            <person name="Naylor J."/>
            <person name="Stange-Thomann N."/>
            <person name="Barrett R."/>
            <person name="Gnerre S."/>
            <person name="Kamal M."/>
            <person name="Kamvysselis M."/>
            <person name="Mauceli E.W."/>
            <person name="Bielke C."/>
            <person name="Rudd S."/>
            <person name="Frishman D."/>
            <person name="Krystofova S."/>
            <person name="Rasmussen C."/>
            <person name="Metzenberg R.L."/>
            <person name="Perkins D.D."/>
            <person name="Kroken S."/>
            <person name="Cogoni C."/>
            <person name="Macino G."/>
            <person name="Catcheside D.E.A."/>
            <person name="Li W."/>
            <person name="Pratt R.J."/>
            <person name="Osmani S.A."/>
            <person name="DeSouza C.P.C."/>
            <person name="Glass N.L."/>
            <person name="Orbach M.J."/>
            <person name="Berglund J.A."/>
            <person name="Voelker R."/>
            <person name="Yarden O."/>
            <person name="Plamann M."/>
            <person name="Seiler S."/>
            <person name="Dunlap J.C."/>
            <person name="Radford A."/>
            <person name="Aramayo R."/>
            <person name="Natvig D.O."/>
            <person name="Alex L.A."/>
            <person name="Mannhaupt G."/>
            <person name="Ebbole D.J."/>
            <person name="Freitag M."/>
            <person name="Paulsen I."/>
            <person name="Sachs M.S."/>
            <person name="Lander E.S."/>
            <person name="Nusbaum C."/>
            <person name="Birren B.W."/>
        </authorList>
    </citation>
    <scope>NUCLEOTIDE SEQUENCE [LARGE SCALE GENOMIC DNA]</scope>
    <source>
        <strain>ATCC 24698 / 74-OR23-1A / CBS 708.71 / DSM 1257 / FGSC 987</strain>
    </source>
</reference>
<reference key="3">
    <citation type="journal article" date="2004" name="Mol. Cell. Biol.">
        <title>Redundancy of the two dicer genes in transgene-induced posttranscriptional gene silencing in Neurospora crassa.</title>
        <authorList>
            <person name="Catalanotto C."/>
            <person name="Pallotta M."/>
            <person name="ReFalo P."/>
            <person name="Sachs M.S."/>
            <person name="Vayssie L."/>
            <person name="Macino G."/>
            <person name="Cogoni C."/>
        </authorList>
    </citation>
    <scope>FUNCTION</scope>
</reference>
<reference key="4">
    <citation type="journal article" date="2005" name="Nucleic Acids Res.">
        <title>The post-transcriptional gene silencing machinery functions independently of DNA methylation to repress a LINE1-like retrotransposon in Neurospora crassa.</title>
        <authorList>
            <person name="Nolan T."/>
            <person name="Braccini L."/>
            <person name="Azzalin G."/>
            <person name="De Toni A."/>
            <person name="Macino G."/>
            <person name="Cogoni C."/>
        </authorList>
    </citation>
    <scope>FUNCTION</scope>
</reference>
<reference key="5">
    <citation type="journal article" date="2007" name="Mol. Cell. Biol.">
        <title>A double-stranded-RNA response program important for RNA interference efficiency.</title>
        <authorList>
            <person name="Choudhary S."/>
            <person name="Lee H.-C."/>
            <person name="Maiti M."/>
            <person name="He Q."/>
            <person name="Cheng P."/>
            <person name="Liu Q."/>
            <person name="Liu Y."/>
        </authorList>
    </citation>
    <scope>FUNCTION</scope>
    <scope>INDUCTION</scope>
</reference>
<accession>Q7SCC1</accession>
<accession>Q8X079</accession>
<keyword id="KW-0051">Antiviral defense</keyword>
<keyword id="KW-0930">Antiviral protein</keyword>
<keyword id="KW-0067">ATP-binding</keyword>
<keyword id="KW-0347">Helicase</keyword>
<keyword id="KW-0378">Hydrolase</keyword>
<keyword id="KW-0460">Magnesium</keyword>
<keyword id="KW-0464">Manganese</keyword>
<keyword id="KW-0479">Metal-binding</keyword>
<keyword id="KW-0547">Nucleotide-binding</keyword>
<keyword id="KW-1185">Reference proteome</keyword>
<keyword id="KW-0677">Repeat</keyword>
<keyword id="KW-0694">RNA-binding</keyword>
<comment type="function">
    <text evidence="8 9 10">Dicer-like endonuclease involved in cleaving double-stranded RNA in the RNA interference (RNAi) pathway. Produces 21 to 25 bp dsRNAs (siRNAs) which target the selective destruction of homologous RNAs leading to sequence-specific suppression of gene expression, called post-transcriptional gene silencing (PTGS). Part of a broad host defense response against viral infection and transposons. Controls the expression of the non-LTR retrotransposon Tad in the African strain, Adiomopoume.</text>
</comment>
<comment type="cofactor">
    <cofactor evidence="1">
        <name>Mg(2+)</name>
        <dbReference type="ChEBI" id="CHEBI:18420"/>
    </cofactor>
    <cofactor evidence="1">
        <name>Mn(2+)</name>
        <dbReference type="ChEBI" id="CHEBI:29035"/>
    </cofactor>
</comment>
<comment type="induction">
    <text evidence="10">By double-stranded RNA (dsRNA).</text>
</comment>
<comment type="similarity">
    <text evidence="6">Belongs to the helicase family. Dicer subfamily.</text>
</comment>
<comment type="sequence caution" evidence="11">
    <conflict type="erroneous gene model prediction">
        <sequence resource="EMBL-CDS" id="CAB91758"/>
    </conflict>
</comment>
<comment type="sequence caution" evidence="11">
    <conflict type="erroneous gene model prediction">
        <sequence resource="EMBL-CDS" id="EAA34302"/>
    </conflict>
</comment>
<sequence>MDQDPRKDNPVEMDVDRDDSSQDPDDNESFKSALDEPLDLKELYQDALEKPSEEPSEELNDQVSTPAALTARAYQLEMFEASLKQNIIVALFSDRVMVADGHWQWQDSGRIWFLTPTVALARQQHRVLQSQIPSVKAIMLCGQDGVDSWSEQAVWDAVLLNVRIVVSTYQILFDANAHSFVRLDSLSLIVIDEAHNCSGSHPIARLMTEAYLPAKKAGLPVPSILGLTASPLKSNNLADIEKLEQVLDAVCRTPTIHREELLAHVNRPEMLVVSYGDSGTDPTPTDLMTRFLEAYHRLDISKDPDVLLLKAQRTERAREKLRQMITKKDTLAQKELRGVYNRALLVRREIGPWAADYYLTRTVSHMLAELERGEPPAQHRYIGEALRSIPIPAISKEPIQLSPKVQTLLKVLASHQQDPVGIVFVKERVMVSIVTHIISTHPLTKDRYRTASMIGTASVPGKARNHMDMTKKEDMTSLEGFRLGRFNLLVATSVLEEGIDVPICNLVICFDEPSNIKSFIQRRGRAREVSSTLYLMVQNASSESATDWHNLERLMKERYEDEMRQNAELELLDDPRIGSYPVLEVESTGARMTIRDARSHLNHFCAKVSSRSRYLQKEPYFVIRQVNPDPASPGRRTLLQATVHLPASLAPDLRRHESLWTWTSEKLAIMDASFQAYKALYNAGLVNENLLPTKVSDFLADLGDDPGHIWVKTQFDPWPEVAYAWQESSSLYSRRLTVLVPGVENPLEFEFILPVPVPYMAPLKLWWNATSALTLITSPEMQEFRKQEGTSAGPDHSYALLAMAFAHRFPIQGRQYPIRLVSTRRKLDVDGIAALEFDPRLYESSPQPPLVRLVDGRNMPYFVTKILPSKPPVELISKPSTDHADLPENVPYVVCKPIGKAVGQFIPLDAAQDQDSWTPKNGKLYRKVLPSTQIRMDNFPAVFAQVGAVIPAFTRAVEMSLVAADLMYNRLGCLQLDNLPLITTALISSGSRGPTNYERLEFIGDTILKFCACLTASALFPNHHERLLSQWKDKLVNNVRLCRASRDFGLDEYIINSAASKKWRPKFVEDYMDEMKSPISAETRQMSSKMVADVVESLIGAAYMCGGMSKALECVALLLPTPKSSQFKWQEIELSRTQLFEFAPKDAILSKQLEPLEKAMDYTFNKKSLLIEAMTHPSCAGLGTNESCYERLEFLGDAILDVIVVKRLMAETGPNELAHNDMHEHLSSVVTADIMAFLAMEWVIMQTDINEIDPTNLDALGLLPSSQSRITPASLVSNKEDWPFWRFMRHNSPQVGATQTATIERYLTLRDEIRDAIWKHNTLPWALLARMGPQKFYSDIVESLIGAVWVDSGSWKACEDVLTQMGLLPLLDHLLETKAHVMHPNVELQILAPPNKRATRTEFVIISNKRGIISSGTEFLDEPSAVDDGLVSVEPYDDTPEHDEVFSCKLFVGGKQVADVTGAATKEEARVRAAEKGCLVIKAERKVWNEAKAAAKEDKGHNTENGDANADNGQSGEKEEVPDCRDADGDTVMN</sequence>
<name>DCL2_NEUCR</name>
<protein>
    <recommendedName>
        <fullName>Dicer-like protein 2</fullName>
    </recommendedName>
    <domain>
        <recommendedName>
            <fullName>Endoribonuclease dcl-2</fullName>
            <ecNumber>3.1.26.-</ecNumber>
        </recommendedName>
    </domain>
    <domain>
        <recommendedName>
            <fullName>ATP-dependent helicase dcl-2</fullName>
            <ecNumber>3.6.4.-</ecNumber>
        </recommendedName>
    </domain>
</protein>
<dbReference type="EC" id="3.1.26.-"/>
<dbReference type="EC" id="3.6.4.-"/>
<dbReference type="EMBL" id="AL356173">
    <property type="protein sequence ID" value="CAB91758.2"/>
    <property type="status" value="ALT_SEQ"/>
    <property type="molecule type" value="Genomic_DNA"/>
</dbReference>
<dbReference type="EMBL" id="CM002237">
    <property type="protein sequence ID" value="EAA34302.3"/>
    <property type="status" value="ALT_SEQ"/>
    <property type="molecule type" value="Genomic_DNA"/>
</dbReference>
<dbReference type="RefSeq" id="XP_963538.3">
    <property type="nucleotide sequence ID" value="XM_958445.3"/>
</dbReference>
<dbReference type="SMR" id="Q7SCC1"/>
<dbReference type="STRING" id="367110.Q7SCC1"/>
<dbReference type="PaxDb" id="5141-EFNCRP00000006887"/>
<dbReference type="EnsemblFungi" id="EAA34302">
    <property type="protein sequence ID" value="EAA34302"/>
    <property type="gene ID" value="NCU06766"/>
</dbReference>
<dbReference type="GeneID" id="3879662"/>
<dbReference type="KEGG" id="ncr:NCU06766"/>
<dbReference type="HOGENOM" id="CLU_000907_4_6_1"/>
<dbReference type="InParanoid" id="Q7SCC1"/>
<dbReference type="OrthoDB" id="416741at2759"/>
<dbReference type="Proteomes" id="UP000001805">
    <property type="component" value="Chromosome 6, Linkage Group II"/>
</dbReference>
<dbReference type="GO" id="GO:0005737">
    <property type="term" value="C:cytoplasm"/>
    <property type="evidence" value="ECO:0000318"/>
    <property type="project" value="GO_Central"/>
</dbReference>
<dbReference type="GO" id="GO:0005634">
    <property type="term" value="C:nucleus"/>
    <property type="evidence" value="ECO:0000318"/>
    <property type="project" value="GO_Central"/>
</dbReference>
<dbReference type="GO" id="GO:0005524">
    <property type="term" value="F:ATP binding"/>
    <property type="evidence" value="ECO:0007669"/>
    <property type="project" value="UniProtKB-KW"/>
</dbReference>
<dbReference type="GO" id="GO:0004386">
    <property type="term" value="F:helicase activity"/>
    <property type="evidence" value="ECO:0007669"/>
    <property type="project" value="UniProtKB-KW"/>
</dbReference>
<dbReference type="GO" id="GO:0046872">
    <property type="term" value="F:metal ion binding"/>
    <property type="evidence" value="ECO:0007669"/>
    <property type="project" value="UniProtKB-KW"/>
</dbReference>
<dbReference type="GO" id="GO:0004525">
    <property type="term" value="F:ribonuclease III activity"/>
    <property type="evidence" value="ECO:0000318"/>
    <property type="project" value="GO_Central"/>
</dbReference>
<dbReference type="GO" id="GO:0003723">
    <property type="term" value="F:RNA binding"/>
    <property type="evidence" value="ECO:0000318"/>
    <property type="project" value="GO_Central"/>
</dbReference>
<dbReference type="GO" id="GO:0051607">
    <property type="term" value="P:defense response to virus"/>
    <property type="evidence" value="ECO:0007669"/>
    <property type="project" value="UniProtKB-KW"/>
</dbReference>
<dbReference type="GO" id="GO:0050688">
    <property type="term" value="P:regulation of defense response to virus"/>
    <property type="evidence" value="ECO:0007669"/>
    <property type="project" value="UniProtKB-KW"/>
</dbReference>
<dbReference type="GO" id="GO:0030422">
    <property type="term" value="P:siRNA processing"/>
    <property type="evidence" value="ECO:0000318"/>
    <property type="project" value="GO_Central"/>
</dbReference>
<dbReference type="CDD" id="cd00593">
    <property type="entry name" value="RIBOc"/>
    <property type="match status" value="2"/>
</dbReference>
<dbReference type="CDD" id="cd18802">
    <property type="entry name" value="SF2_C_dicer"/>
    <property type="match status" value="1"/>
</dbReference>
<dbReference type="FunFam" id="1.10.1520.10:FF:000015">
    <property type="entry name" value="Dicer-like protein 1"/>
    <property type="match status" value="1"/>
</dbReference>
<dbReference type="Gene3D" id="3.30.160.380">
    <property type="entry name" value="Dicer dimerisation domain"/>
    <property type="match status" value="1"/>
</dbReference>
<dbReference type="Gene3D" id="3.40.50.300">
    <property type="entry name" value="P-loop containing nucleotide triphosphate hydrolases"/>
    <property type="match status" value="2"/>
</dbReference>
<dbReference type="Gene3D" id="1.10.1520.10">
    <property type="entry name" value="Ribonuclease III domain"/>
    <property type="match status" value="2"/>
</dbReference>
<dbReference type="InterPro" id="IPR011545">
    <property type="entry name" value="DEAD/DEAH_box_helicase_dom"/>
</dbReference>
<dbReference type="InterPro" id="IPR038248">
    <property type="entry name" value="Dicer_dimer_sf"/>
</dbReference>
<dbReference type="InterPro" id="IPR005034">
    <property type="entry name" value="Dicer_dimerisation_dom"/>
</dbReference>
<dbReference type="InterPro" id="IPR014720">
    <property type="entry name" value="dsRBD_dom"/>
</dbReference>
<dbReference type="InterPro" id="IPR014001">
    <property type="entry name" value="Helicase_ATP-bd"/>
</dbReference>
<dbReference type="InterPro" id="IPR001650">
    <property type="entry name" value="Helicase_C-like"/>
</dbReference>
<dbReference type="InterPro" id="IPR027417">
    <property type="entry name" value="P-loop_NTPase"/>
</dbReference>
<dbReference type="InterPro" id="IPR000999">
    <property type="entry name" value="RNase_III_dom"/>
</dbReference>
<dbReference type="InterPro" id="IPR036389">
    <property type="entry name" value="RNase_III_sf"/>
</dbReference>
<dbReference type="PANTHER" id="PTHR14950">
    <property type="entry name" value="DICER-RELATED"/>
    <property type="match status" value="1"/>
</dbReference>
<dbReference type="PANTHER" id="PTHR14950:SF37">
    <property type="entry name" value="ENDORIBONUCLEASE DICER"/>
    <property type="match status" value="1"/>
</dbReference>
<dbReference type="Pfam" id="PF00270">
    <property type="entry name" value="DEAD"/>
    <property type="match status" value="1"/>
</dbReference>
<dbReference type="Pfam" id="PF03368">
    <property type="entry name" value="Dicer_dimer"/>
    <property type="match status" value="1"/>
</dbReference>
<dbReference type="Pfam" id="PF00271">
    <property type="entry name" value="Helicase_C"/>
    <property type="match status" value="1"/>
</dbReference>
<dbReference type="Pfam" id="PF00636">
    <property type="entry name" value="Ribonuclease_3"/>
    <property type="match status" value="2"/>
</dbReference>
<dbReference type="SMART" id="SM00487">
    <property type="entry name" value="DEXDc"/>
    <property type="match status" value="1"/>
</dbReference>
<dbReference type="SMART" id="SM00490">
    <property type="entry name" value="HELICc"/>
    <property type="match status" value="1"/>
</dbReference>
<dbReference type="SMART" id="SM00535">
    <property type="entry name" value="RIBOc"/>
    <property type="match status" value="2"/>
</dbReference>
<dbReference type="SUPFAM" id="SSF52540">
    <property type="entry name" value="P-loop containing nucleoside triphosphate hydrolases"/>
    <property type="match status" value="1"/>
</dbReference>
<dbReference type="SUPFAM" id="SSF69065">
    <property type="entry name" value="RNase III domain-like"/>
    <property type="match status" value="2"/>
</dbReference>
<dbReference type="PROSITE" id="PS00690">
    <property type="entry name" value="DEAH_ATP_HELICASE"/>
    <property type="match status" value="1"/>
</dbReference>
<dbReference type="PROSITE" id="PS51327">
    <property type="entry name" value="DICER_DSRBF"/>
    <property type="match status" value="1"/>
</dbReference>
<dbReference type="PROSITE" id="PS50137">
    <property type="entry name" value="DS_RBD"/>
    <property type="match status" value="1"/>
</dbReference>
<dbReference type="PROSITE" id="PS51192">
    <property type="entry name" value="HELICASE_ATP_BIND_1"/>
    <property type="match status" value="1"/>
</dbReference>
<dbReference type="PROSITE" id="PS51194">
    <property type="entry name" value="HELICASE_CTER"/>
    <property type="match status" value="1"/>
</dbReference>
<dbReference type="PROSITE" id="PS00517">
    <property type="entry name" value="RNASE_3_1"/>
    <property type="match status" value="1"/>
</dbReference>
<dbReference type="PROSITE" id="PS50142">
    <property type="entry name" value="RNASE_3_2"/>
    <property type="match status" value="2"/>
</dbReference>
<gene>
    <name type="primary">dcl-2</name>
    <name type="ORF">B14D6.490</name>
    <name type="ORF">NCU06766</name>
</gene>